<feature type="chain" id="PRO_0000049988" description="Uncharacterized protein YwnF">
    <location>
        <begin position="1"/>
        <end position="144"/>
    </location>
</feature>
<feature type="transmembrane region" description="Helical" evidence="1">
    <location>
        <begin position="31"/>
        <end position="53"/>
    </location>
</feature>
<feature type="transmembrane region" description="Helical" evidence="1">
    <location>
        <begin position="63"/>
        <end position="80"/>
    </location>
</feature>
<sequence>MNFYRVEQMPGFIKTEMQKIQKAVQPFMKKTVIYRFLAIPLAAFSLFNLAAFLFHASADRESLISAGIFALLAALGLAFFKEAGYQHKQIQKTVHIYMLNRIKKSEILSEERKSSYARQIKEEPFAMRSFVEFLTEEDRRKKMY</sequence>
<proteinExistence type="predicted"/>
<organism>
    <name type="scientific">Bacillus subtilis (strain 168)</name>
    <dbReference type="NCBI Taxonomy" id="224308"/>
    <lineage>
        <taxon>Bacteria</taxon>
        <taxon>Bacillati</taxon>
        <taxon>Bacillota</taxon>
        <taxon>Bacilli</taxon>
        <taxon>Bacillales</taxon>
        <taxon>Bacillaceae</taxon>
        <taxon>Bacillus</taxon>
    </lineage>
</organism>
<dbReference type="EMBL" id="Y08559">
    <property type="protein sequence ID" value="CAA69865.1"/>
    <property type="molecule type" value="Genomic_DNA"/>
</dbReference>
<dbReference type="EMBL" id="AL009126">
    <property type="protein sequence ID" value="CAB15675.1"/>
    <property type="molecule type" value="Genomic_DNA"/>
</dbReference>
<dbReference type="PIR" id="H70063">
    <property type="entry name" value="H70063"/>
</dbReference>
<dbReference type="RefSeq" id="NP_391539.1">
    <property type="nucleotide sequence ID" value="NC_000964.3"/>
</dbReference>
<dbReference type="RefSeq" id="WP_003244359.1">
    <property type="nucleotide sequence ID" value="NZ_OZ025638.1"/>
</dbReference>
<dbReference type="FunCoup" id="P71041">
    <property type="interactions" value="14"/>
</dbReference>
<dbReference type="STRING" id="224308.BSU36580"/>
<dbReference type="PaxDb" id="224308-BSU36580"/>
<dbReference type="EnsemblBacteria" id="CAB15675">
    <property type="protein sequence ID" value="CAB15675"/>
    <property type="gene ID" value="BSU_36580"/>
</dbReference>
<dbReference type="GeneID" id="936942"/>
<dbReference type="KEGG" id="bsu:BSU36580"/>
<dbReference type="PATRIC" id="fig|224308.179.peg.3958"/>
<dbReference type="eggNOG" id="ENOG5032ZHT">
    <property type="taxonomic scope" value="Bacteria"/>
</dbReference>
<dbReference type="InParanoid" id="P71041"/>
<dbReference type="OrthoDB" id="2451415at2"/>
<dbReference type="BioCyc" id="BSUB:BSU36580-MONOMER"/>
<dbReference type="Proteomes" id="UP000001570">
    <property type="component" value="Chromosome"/>
</dbReference>
<dbReference type="GO" id="GO:0005886">
    <property type="term" value="C:plasma membrane"/>
    <property type="evidence" value="ECO:0007669"/>
    <property type="project" value="UniProtKB-SubCell"/>
</dbReference>
<dbReference type="InterPro" id="IPR020205">
    <property type="entry name" value="Uncharacterised_YwnF_TM"/>
</dbReference>
<dbReference type="Pfam" id="PF17370">
    <property type="entry name" value="DUF5392"/>
    <property type="match status" value="1"/>
</dbReference>
<name>YWNF_BACSU</name>
<reference key="1">
    <citation type="journal article" date="1997" name="J. Bacteriol.">
        <title>The Bacillus subtilis ureABC operon.</title>
        <authorList>
            <person name="Cruz-Ramos H."/>
            <person name="Glaser P."/>
            <person name="Wray L.V. Jr."/>
            <person name="Fisher S.H."/>
        </authorList>
    </citation>
    <scope>NUCLEOTIDE SEQUENCE [GENOMIC DNA]</scope>
    <source>
        <strain>168</strain>
    </source>
</reference>
<reference key="2">
    <citation type="journal article" date="1997" name="Nature">
        <title>The complete genome sequence of the Gram-positive bacterium Bacillus subtilis.</title>
        <authorList>
            <person name="Kunst F."/>
            <person name="Ogasawara N."/>
            <person name="Moszer I."/>
            <person name="Albertini A.M."/>
            <person name="Alloni G."/>
            <person name="Azevedo V."/>
            <person name="Bertero M.G."/>
            <person name="Bessieres P."/>
            <person name="Bolotin A."/>
            <person name="Borchert S."/>
            <person name="Borriss R."/>
            <person name="Boursier L."/>
            <person name="Brans A."/>
            <person name="Braun M."/>
            <person name="Brignell S.C."/>
            <person name="Bron S."/>
            <person name="Brouillet S."/>
            <person name="Bruschi C.V."/>
            <person name="Caldwell B."/>
            <person name="Capuano V."/>
            <person name="Carter N.M."/>
            <person name="Choi S.-K."/>
            <person name="Codani J.-J."/>
            <person name="Connerton I.F."/>
            <person name="Cummings N.J."/>
            <person name="Daniel R.A."/>
            <person name="Denizot F."/>
            <person name="Devine K.M."/>
            <person name="Duesterhoeft A."/>
            <person name="Ehrlich S.D."/>
            <person name="Emmerson P.T."/>
            <person name="Entian K.-D."/>
            <person name="Errington J."/>
            <person name="Fabret C."/>
            <person name="Ferrari E."/>
            <person name="Foulger D."/>
            <person name="Fritz C."/>
            <person name="Fujita M."/>
            <person name="Fujita Y."/>
            <person name="Fuma S."/>
            <person name="Galizzi A."/>
            <person name="Galleron N."/>
            <person name="Ghim S.-Y."/>
            <person name="Glaser P."/>
            <person name="Goffeau A."/>
            <person name="Golightly E.J."/>
            <person name="Grandi G."/>
            <person name="Guiseppi G."/>
            <person name="Guy B.J."/>
            <person name="Haga K."/>
            <person name="Haiech J."/>
            <person name="Harwood C.R."/>
            <person name="Henaut A."/>
            <person name="Hilbert H."/>
            <person name="Holsappel S."/>
            <person name="Hosono S."/>
            <person name="Hullo M.-F."/>
            <person name="Itaya M."/>
            <person name="Jones L.-M."/>
            <person name="Joris B."/>
            <person name="Karamata D."/>
            <person name="Kasahara Y."/>
            <person name="Klaerr-Blanchard M."/>
            <person name="Klein C."/>
            <person name="Kobayashi Y."/>
            <person name="Koetter P."/>
            <person name="Koningstein G."/>
            <person name="Krogh S."/>
            <person name="Kumano M."/>
            <person name="Kurita K."/>
            <person name="Lapidus A."/>
            <person name="Lardinois S."/>
            <person name="Lauber J."/>
            <person name="Lazarevic V."/>
            <person name="Lee S.-M."/>
            <person name="Levine A."/>
            <person name="Liu H."/>
            <person name="Masuda S."/>
            <person name="Mauel C."/>
            <person name="Medigue C."/>
            <person name="Medina N."/>
            <person name="Mellado R.P."/>
            <person name="Mizuno M."/>
            <person name="Moestl D."/>
            <person name="Nakai S."/>
            <person name="Noback M."/>
            <person name="Noone D."/>
            <person name="O'Reilly M."/>
            <person name="Ogawa K."/>
            <person name="Ogiwara A."/>
            <person name="Oudega B."/>
            <person name="Park S.-H."/>
            <person name="Parro V."/>
            <person name="Pohl T.M."/>
            <person name="Portetelle D."/>
            <person name="Porwollik S."/>
            <person name="Prescott A.M."/>
            <person name="Presecan E."/>
            <person name="Pujic P."/>
            <person name="Purnelle B."/>
            <person name="Rapoport G."/>
            <person name="Rey M."/>
            <person name="Reynolds S."/>
            <person name="Rieger M."/>
            <person name="Rivolta C."/>
            <person name="Rocha E."/>
            <person name="Roche B."/>
            <person name="Rose M."/>
            <person name="Sadaie Y."/>
            <person name="Sato T."/>
            <person name="Scanlan E."/>
            <person name="Schleich S."/>
            <person name="Schroeter R."/>
            <person name="Scoffone F."/>
            <person name="Sekiguchi J."/>
            <person name="Sekowska A."/>
            <person name="Seror S.J."/>
            <person name="Serror P."/>
            <person name="Shin B.-S."/>
            <person name="Soldo B."/>
            <person name="Sorokin A."/>
            <person name="Tacconi E."/>
            <person name="Takagi T."/>
            <person name="Takahashi H."/>
            <person name="Takemaru K."/>
            <person name="Takeuchi M."/>
            <person name="Tamakoshi A."/>
            <person name="Tanaka T."/>
            <person name="Terpstra P."/>
            <person name="Tognoni A."/>
            <person name="Tosato V."/>
            <person name="Uchiyama S."/>
            <person name="Vandenbol M."/>
            <person name="Vannier F."/>
            <person name="Vassarotti A."/>
            <person name="Viari A."/>
            <person name="Wambutt R."/>
            <person name="Wedler E."/>
            <person name="Wedler H."/>
            <person name="Weitzenegger T."/>
            <person name="Winters P."/>
            <person name="Wipat A."/>
            <person name="Yamamoto H."/>
            <person name="Yamane K."/>
            <person name="Yasumoto K."/>
            <person name="Yata K."/>
            <person name="Yoshida K."/>
            <person name="Yoshikawa H.-F."/>
            <person name="Zumstein E."/>
            <person name="Yoshikawa H."/>
            <person name="Danchin A."/>
        </authorList>
    </citation>
    <scope>NUCLEOTIDE SEQUENCE [LARGE SCALE GENOMIC DNA]</scope>
    <source>
        <strain>168</strain>
    </source>
</reference>
<gene>
    <name type="primary">ywnF</name>
    <name type="ordered locus">BSU36580</name>
</gene>
<comment type="subcellular location">
    <subcellularLocation>
        <location evidence="2">Cell membrane</location>
        <topology evidence="2">Multi-pass membrane protein</topology>
    </subcellularLocation>
</comment>
<evidence type="ECO:0000255" key="1"/>
<evidence type="ECO:0000305" key="2"/>
<protein>
    <recommendedName>
        <fullName>Uncharacterized protein YwnF</fullName>
    </recommendedName>
</protein>
<accession>P71041</accession>
<keyword id="KW-1003">Cell membrane</keyword>
<keyword id="KW-0472">Membrane</keyword>
<keyword id="KW-1185">Reference proteome</keyword>
<keyword id="KW-0812">Transmembrane</keyword>
<keyword id="KW-1133">Transmembrane helix</keyword>